<keyword id="KW-0067">ATP-binding</keyword>
<keyword id="KW-0963">Cytoplasm</keyword>
<keyword id="KW-0547">Nucleotide-binding</keyword>
<keyword id="KW-0539">Nucleus</keyword>
<keyword id="KW-0647">Proteasome</keyword>
<keyword id="KW-1185">Reference proteome</keyword>
<gene>
    <name type="primary">RPT5</name>
    <name type="ordered locus">ECU10_1420</name>
</gene>
<comment type="function">
    <text evidence="1">Acts as a regulatory subunit of the 26S proteasome which degrades poly-ubiquitinated proteins in the cytoplasm and in the nucleus. It is essential for the regulated turnover of proteins and for the removal of misfolded proteins. The proteasome is a multicatalytic proteinase complex that is characterized by its ability to cleave peptides with Arg, Phe, Tyr, Leu, and Glu adjacent to the leaving group at neutral or slightly basic pH (By similarity).</text>
</comment>
<comment type="subunit">
    <text evidence="1">The 26S proteasome consists of a 20S proteasome core and two 19S regulatory subunits. The 20S proteasome core is composed of 28 subunits that are arranged in four stacked rings, resulting in a barrel-shaped structure. The two end rings are each formed by seven alpha subunits, and the two central rings are each formed by seven beta subunits. The catalytic chamber with the active sites is on the inside of the barrel (By similarity).</text>
</comment>
<comment type="subcellular location">
    <subcellularLocation>
        <location evidence="1">Cytoplasm</location>
    </subcellularLocation>
    <subcellularLocation>
        <location evidence="1">Nucleus</location>
    </subcellularLocation>
</comment>
<comment type="developmental stage">
    <text evidence="3">Expressed in late sporogonial stages.</text>
</comment>
<comment type="similarity">
    <text evidence="4">Belongs to the AAA ATPase family.</text>
</comment>
<sequence length="401" mass="44870">MSLEELEAMDQSNPGEFLERVREKIRMLNSETRILQSRVNTIKHDISTKNASIAENMERIRLNKQLPYLVGNVVEVLDEHSGVVNASTRMSSYLPITGLIPNSELRPGDLVALHKDTNIVFEKLPPDYDMKVGGMVLKSDAKPDETYEDIGGLERQIEELNEAIVLSLTHPERFEKLNIKPPKGVLMYGPPGTGKTLMARACASKTNATFLKLAGPQLVQMYIGDGARLVRDAFALAKERKPTIIFIDEIDAIGAKRSDSDQTGDREVQRTMLELLNQLDGFSSSEEVKIIAATNRVDILDPALLRSGRLDRKIEFPLPNTLGRKRILQIHARKMSVRDDVNFDELARSTEGFNGAQCKAVCVEAGMAALRKEKTEISQNDFMDGIQEVLSRKKSKLLYFT</sequence>
<protein>
    <recommendedName>
        <fullName>26S proteasome regulatory subunit 6A</fullName>
    </recommendedName>
</protein>
<organism>
    <name type="scientific">Encephalitozoon cuniculi (strain GB-M1)</name>
    <name type="common">Microsporidian parasite</name>
    <dbReference type="NCBI Taxonomy" id="284813"/>
    <lineage>
        <taxon>Eukaryota</taxon>
        <taxon>Fungi</taxon>
        <taxon>Fungi incertae sedis</taxon>
        <taxon>Microsporidia</taxon>
        <taxon>Unikaryonidae</taxon>
        <taxon>Encephalitozoon</taxon>
    </lineage>
</organism>
<accession>Q8SR13</accession>
<evidence type="ECO:0000250" key="1"/>
<evidence type="ECO:0000255" key="2"/>
<evidence type="ECO:0000269" key="3">
    <source>
    </source>
</evidence>
<evidence type="ECO:0000305" key="4"/>
<proteinExistence type="evidence at protein level"/>
<name>PRS6A_ENCCU</name>
<reference key="1">
    <citation type="journal article" date="2001" name="Nature">
        <title>Genome sequence and gene compaction of the eukaryote parasite Encephalitozoon cuniculi.</title>
        <authorList>
            <person name="Katinka M.D."/>
            <person name="Duprat S."/>
            <person name="Cornillot E."/>
            <person name="Metenier G."/>
            <person name="Thomarat F."/>
            <person name="Prensier G."/>
            <person name="Barbe V."/>
            <person name="Peyretaillade E."/>
            <person name="Brottier P."/>
            <person name="Wincker P."/>
            <person name="Delbac F."/>
            <person name="El Alaoui H."/>
            <person name="Peyret P."/>
            <person name="Saurin W."/>
            <person name="Gouy M."/>
            <person name="Weissenbach J."/>
            <person name="Vivares C.P."/>
        </authorList>
    </citation>
    <scope>NUCLEOTIDE SEQUENCE [LARGE SCALE GENOMIC DNA]</scope>
    <source>
        <strain>GB-M1</strain>
    </source>
</reference>
<reference key="2">
    <citation type="journal article" date="2006" name="Proteomics">
        <title>Proteomic analysis of the eukaryotic parasite Encephalitozoon cuniculi (microsporidia): a reference map for proteins expressed in late sporogonial stages.</title>
        <authorList>
            <person name="Brosson D."/>
            <person name="Kuhn L."/>
            <person name="Delbac F."/>
            <person name="Garin J."/>
            <person name="Vivares C.P."/>
            <person name="Texier C."/>
        </authorList>
    </citation>
    <scope>IDENTIFICATION BY MASS SPECTROMETRY [LARGE SCALE ANALYSIS]</scope>
    <scope>DEVELOPMENTAL STAGE</scope>
</reference>
<dbReference type="EMBL" id="AL590449">
    <property type="protein sequence ID" value="CAD25861.1"/>
    <property type="molecule type" value="Genomic_DNA"/>
</dbReference>
<dbReference type="RefSeq" id="NP_586257.1">
    <property type="nucleotide sequence ID" value="NM_001042090.1"/>
</dbReference>
<dbReference type="SMR" id="Q8SR13"/>
<dbReference type="FunCoup" id="Q8SR13">
    <property type="interactions" value="163"/>
</dbReference>
<dbReference type="STRING" id="284813.Q8SR13"/>
<dbReference type="GeneID" id="859907"/>
<dbReference type="KEGG" id="ecu:ECU10_1420"/>
<dbReference type="VEuPathDB" id="MicrosporidiaDB:ECU10_1420"/>
<dbReference type="HOGENOM" id="CLU_000688_2_0_1"/>
<dbReference type="InParanoid" id="Q8SR13"/>
<dbReference type="OMA" id="NKISHEH"/>
<dbReference type="OrthoDB" id="9443236at2759"/>
<dbReference type="Proteomes" id="UP000000819">
    <property type="component" value="Chromosome X"/>
</dbReference>
<dbReference type="GO" id="GO:0005737">
    <property type="term" value="C:cytoplasm"/>
    <property type="evidence" value="ECO:0007669"/>
    <property type="project" value="UniProtKB-SubCell"/>
</dbReference>
<dbReference type="GO" id="GO:0005634">
    <property type="term" value="C:nucleus"/>
    <property type="evidence" value="ECO:0007669"/>
    <property type="project" value="UniProtKB-SubCell"/>
</dbReference>
<dbReference type="GO" id="GO:0008540">
    <property type="term" value="C:proteasome regulatory particle, base subcomplex"/>
    <property type="evidence" value="ECO:0007669"/>
    <property type="project" value="UniProtKB-ARBA"/>
</dbReference>
<dbReference type="GO" id="GO:0005524">
    <property type="term" value="F:ATP binding"/>
    <property type="evidence" value="ECO:0007669"/>
    <property type="project" value="UniProtKB-KW"/>
</dbReference>
<dbReference type="GO" id="GO:0016887">
    <property type="term" value="F:ATP hydrolysis activity"/>
    <property type="evidence" value="ECO:0007669"/>
    <property type="project" value="InterPro"/>
</dbReference>
<dbReference type="FunFam" id="1.10.8.60:FF:000009">
    <property type="entry name" value="26S protease regulatory subunit 6A"/>
    <property type="match status" value="1"/>
</dbReference>
<dbReference type="FunFam" id="3.40.50.300:FF:000037">
    <property type="entry name" value="26S protease regulatory subunit 6A"/>
    <property type="match status" value="1"/>
</dbReference>
<dbReference type="Gene3D" id="1.10.8.60">
    <property type="match status" value="1"/>
</dbReference>
<dbReference type="Gene3D" id="2.40.50.140">
    <property type="entry name" value="Nucleic acid-binding proteins"/>
    <property type="match status" value="1"/>
</dbReference>
<dbReference type="Gene3D" id="3.40.50.300">
    <property type="entry name" value="P-loop containing nucleotide triphosphate hydrolases"/>
    <property type="match status" value="1"/>
</dbReference>
<dbReference type="InterPro" id="IPR050221">
    <property type="entry name" value="26S_Proteasome_ATPase"/>
</dbReference>
<dbReference type="InterPro" id="IPR003593">
    <property type="entry name" value="AAA+_ATPase"/>
</dbReference>
<dbReference type="InterPro" id="IPR041569">
    <property type="entry name" value="AAA_lid_3"/>
</dbReference>
<dbReference type="InterPro" id="IPR003959">
    <property type="entry name" value="ATPase_AAA_core"/>
</dbReference>
<dbReference type="InterPro" id="IPR003960">
    <property type="entry name" value="ATPase_AAA_CS"/>
</dbReference>
<dbReference type="InterPro" id="IPR012340">
    <property type="entry name" value="NA-bd_OB-fold"/>
</dbReference>
<dbReference type="InterPro" id="IPR027417">
    <property type="entry name" value="P-loop_NTPase"/>
</dbReference>
<dbReference type="InterPro" id="IPR032501">
    <property type="entry name" value="Prot_ATP_ID_OB_2nd"/>
</dbReference>
<dbReference type="PANTHER" id="PTHR23073">
    <property type="entry name" value="26S PROTEASOME REGULATORY SUBUNIT"/>
    <property type="match status" value="1"/>
</dbReference>
<dbReference type="Pfam" id="PF00004">
    <property type="entry name" value="AAA"/>
    <property type="match status" value="1"/>
</dbReference>
<dbReference type="Pfam" id="PF17862">
    <property type="entry name" value="AAA_lid_3"/>
    <property type="match status" value="1"/>
</dbReference>
<dbReference type="Pfam" id="PF16450">
    <property type="entry name" value="Prot_ATP_ID_OB_C"/>
    <property type="match status" value="1"/>
</dbReference>
<dbReference type="SMART" id="SM00382">
    <property type="entry name" value="AAA"/>
    <property type="match status" value="1"/>
</dbReference>
<dbReference type="SUPFAM" id="SSF52540">
    <property type="entry name" value="P-loop containing nucleoside triphosphate hydrolases"/>
    <property type="match status" value="1"/>
</dbReference>
<dbReference type="PROSITE" id="PS00674">
    <property type="entry name" value="AAA"/>
    <property type="match status" value="1"/>
</dbReference>
<feature type="chain" id="PRO_0000382905" description="26S proteasome regulatory subunit 6A">
    <location>
        <begin position="1"/>
        <end position="401"/>
    </location>
</feature>
<feature type="binding site" evidence="2">
    <location>
        <begin position="189"/>
        <end position="196"/>
    </location>
    <ligand>
        <name>ATP</name>
        <dbReference type="ChEBI" id="CHEBI:30616"/>
    </ligand>
</feature>